<evidence type="ECO:0000255" key="1">
    <source>
        <dbReference type="PROSITE-ProRule" id="PRU00340"/>
    </source>
</evidence>
<evidence type="ECO:0000269" key="2">
    <source>
    </source>
</evidence>
<name>BIGR_AGRFC</name>
<proteinExistence type="evidence at protein level"/>
<feature type="chain" id="PRO_0000305335" description="Biofilm growth-associated repressor">
    <location>
        <begin position="1"/>
        <end position="117"/>
    </location>
</feature>
<feature type="domain" description="HTH arsR-type" evidence="1">
    <location>
        <begin position="20"/>
        <end position="114"/>
    </location>
</feature>
<feature type="DNA-binding region" description="H-T-H motif" evidence="1">
    <location>
        <begin position="54"/>
        <end position="77"/>
    </location>
</feature>
<gene>
    <name type="primary">bigR</name>
    <name type="ordered locus">Atu3466</name>
    <name type="ORF">AGR_L_2725</name>
</gene>
<comment type="function">
    <text evidence="2">Represses an operon that comprises at least itself and blh. Binds to a palindromic AT-rich sequence spanning the -10 region of the blh promoter and blocks transcription of the operon.</text>
</comment>
<comment type="disruption phenotype">
    <text evidence="2">Cells show altered biofilm formation; on glass surfaces and on tobacco root surfaces, it exhibits a greater biofilm mass than the wild-type.</text>
</comment>
<sequence>MVTETPLEKPLDIGEIPLPAMEKRATEVAILLKTLAHPARLMLACTLAQGEFSVGELEAKLDIRQPTLSQQLGVLREAGIVDTRREAKQIFYRLAEDKAARLIEALYAIFCAPEENL</sequence>
<reference key="1">
    <citation type="journal article" date="2001" name="Science">
        <title>The genome of the natural genetic engineer Agrobacterium tumefaciens C58.</title>
        <authorList>
            <person name="Wood D.W."/>
            <person name="Setubal J.C."/>
            <person name="Kaul R."/>
            <person name="Monks D.E."/>
            <person name="Kitajima J.P."/>
            <person name="Okura V.K."/>
            <person name="Zhou Y."/>
            <person name="Chen L."/>
            <person name="Wood G.E."/>
            <person name="Almeida N.F. Jr."/>
            <person name="Woo L."/>
            <person name="Chen Y."/>
            <person name="Paulsen I.T."/>
            <person name="Eisen J.A."/>
            <person name="Karp P.D."/>
            <person name="Bovee D. Sr."/>
            <person name="Chapman P."/>
            <person name="Clendenning J."/>
            <person name="Deatherage G."/>
            <person name="Gillet W."/>
            <person name="Grant C."/>
            <person name="Kutyavin T."/>
            <person name="Levy R."/>
            <person name="Li M.-J."/>
            <person name="McClelland E."/>
            <person name="Palmieri A."/>
            <person name="Raymond C."/>
            <person name="Rouse G."/>
            <person name="Saenphimmachak C."/>
            <person name="Wu Z."/>
            <person name="Romero P."/>
            <person name="Gordon D."/>
            <person name="Zhang S."/>
            <person name="Yoo H."/>
            <person name="Tao Y."/>
            <person name="Biddle P."/>
            <person name="Jung M."/>
            <person name="Krespan W."/>
            <person name="Perry M."/>
            <person name="Gordon-Kamm B."/>
            <person name="Liao L."/>
            <person name="Kim S."/>
            <person name="Hendrick C."/>
            <person name="Zhao Z.-Y."/>
            <person name="Dolan M."/>
            <person name="Chumley F."/>
            <person name="Tingey S.V."/>
            <person name="Tomb J.-F."/>
            <person name="Gordon M.P."/>
            <person name="Olson M.V."/>
            <person name="Nester E.W."/>
        </authorList>
    </citation>
    <scope>NUCLEOTIDE SEQUENCE [LARGE SCALE GENOMIC DNA]</scope>
    <source>
        <strain>C58 / ATCC 33970</strain>
    </source>
</reference>
<reference key="2">
    <citation type="journal article" date="2001" name="Science">
        <title>Genome sequence of the plant pathogen and biotechnology agent Agrobacterium tumefaciens C58.</title>
        <authorList>
            <person name="Goodner B."/>
            <person name="Hinkle G."/>
            <person name="Gattung S."/>
            <person name="Miller N."/>
            <person name="Blanchard M."/>
            <person name="Qurollo B."/>
            <person name="Goldman B.S."/>
            <person name="Cao Y."/>
            <person name="Askenazi M."/>
            <person name="Halling C."/>
            <person name="Mullin L."/>
            <person name="Houmiel K."/>
            <person name="Gordon J."/>
            <person name="Vaudin M."/>
            <person name="Iartchouk O."/>
            <person name="Epp A."/>
            <person name="Liu F."/>
            <person name="Wollam C."/>
            <person name="Allinger M."/>
            <person name="Doughty D."/>
            <person name="Scott C."/>
            <person name="Lappas C."/>
            <person name="Markelz B."/>
            <person name="Flanagan C."/>
            <person name="Crowell C."/>
            <person name="Gurson J."/>
            <person name="Lomo C."/>
            <person name="Sear C."/>
            <person name="Strub G."/>
            <person name="Cielo C."/>
            <person name="Slater S."/>
        </authorList>
    </citation>
    <scope>NUCLEOTIDE SEQUENCE [LARGE SCALE GENOMIC DNA]</scope>
    <source>
        <strain>C58 / ATCC 33970</strain>
    </source>
</reference>
<reference key="3">
    <citation type="journal article" date="2007" name="J. Bacteriol.">
        <title>BigR, a transcriptional repressor from plant-associated bacteria, regulates an operon implicated in biofilm growth.</title>
        <authorList>
            <person name="Barbosa R.L."/>
            <person name="Benedetti C.E."/>
        </authorList>
    </citation>
    <scope>FUNCTION AS A REPRESSOR AND IN BIOFILM FORMATION</scope>
    <scope>DISRUPTION PHENOTYPE</scope>
</reference>
<organism>
    <name type="scientific">Agrobacterium fabrum (strain C58 / ATCC 33970)</name>
    <name type="common">Agrobacterium tumefaciens (strain C58)</name>
    <dbReference type="NCBI Taxonomy" id="176299"/>
    <lineage>
        <taxon>Bacteria</taxon>
        <taxon>Pseudomonadati</taxon>
        <taxon>Pseudomonadota</taxon>
        <taxon>Alphaproteobacteria</taxon>
        <taxon>Hyphomicrobiales</taxon>
        <taxon>Rhizobiaceae</taxon>
        <taxon>Rhizobium/Agrobacterium group</taxon>
        <taxon>Agrobacterium</taxon>
        <taxon>Agrobacterium tumefaciens complex</taxon>
    </lineage>
</organism>
<protein>
    <recommendedName>
        <fullName>Biofilm growth-associated repressor</fullName>
    </recommendedName>
</protein>
<accession>Q8UAA8</accession>
<accession>Q7CSJ3</accession>
<dbReference type="EMBL" id="AE007870">
    <property type="protein sequence ID" value="AAK89928.1"/>
    <property type="molecule type" value="Genomic_DNA"/>
</dbReference>
<dbReference type="PIR" id="AI2982">
    <property type="entry name" value="AI2982"/>
</dbReference>
<dbReference type="PIR" id="F98300">
    <property type="entry name" value="F98300"/>
</dbReference>
<dbReference type="RefSeq" id="NP_357143.1">
    <property type="nucleotide sequence ID" value="NC_003063.2"/>
</dbReference>
<dbReference type="RefSeq" id="WP_010973063.1">
    <property type="nucleotide sequence ID" value="NC_003063.2"/>
</dbReference>
<dbReference type="SMR" id="Q8UAA8"/>
<dbReference type="STRING" id="176299.Atu3466"/>
<dbReference type="EnsemblBacteria" id="AAK89928">
    <property type="protein sequence ID" value="AAK89928"/>
    <property type="gene ID" value="Atu3466"/>
</dbReference>
<dbReference type="GeneID" id="1135340"/>
<dbReference type="KEGG" id="atu:Atu3466"/>
<dbReference type="PATRIC" id="fig|176299.10.peg.3305"/>
<dbReference type="eggNOG" id="COG0640">
    <property type="taxonomic scope" value="Bacteria"/>
</dbReference>
<dbReference type="HOGENOM" id="CLU_097806_6_4_5"/>
<dbReference type="OrthoDB" id="194599at2"/>
<dbReference type="PhylomeDB" id="Q8UAA8"/>
<dbReference type="Proteomes" id="UP000000813">
    <property type="component" value="Chromosome linear"/>
</dbReference>
<dbReference type="GO" id="GO:0003677">
    <property type="term" value="F:DNA binding"/>
    <property type="evidence" value="ECO:0007669"/>
    <property type="project" value="UniProtKB-KW"/>
</dbReference>
<dbReference type="GO" id="GO:0003700">
    <property type="term" value="F:DNA-binding transcription factor activity"/>
    <property type="evidence" value="ECO:0007669"/>
    <property type="project" value="InterPro"/>
</dbReference>
<dbReference type="CDD" id="cd00090">
    <property type="entry name" value="HTH_ARSR"/>
    <property type="match status" value="1"/>
</dbReference>
<dbReference type="Gene3D" id="1.10.10.10">
    <property type="entry name" value="Winged helix-like DNA-binding domain superfamily/Winged helix DNA-binding domain"/>
    <property type="match status" value="1"/>
</dbReference>
<dbReference type="InterPro" id="IPR011991">
    <property type="entry name" value="ArsR-like_HTH"/>
</dbReference>
<dbReference type="InterPro" id="IPR001845">
    <property type="entry name" value="HTH_ArsR_DNA-bd_dom"/>
</dbReference>
<dbReference type="InterPro" id="IPR051011">
    <property type="entry name" value="Metal_resp_trans_reg"/>
</dbReference>
<dbReference type="InterPro" id="IPR036388">
    <property type="entry name" value="WH-like_DNA-bd_sf"/>
</dbReference>
<dbReference type="InterPro" id="IPR036390">
    <property type="entry name" value="WH_DNA-bd_sf"/>
</dbReference>
<dbReference type="NCBIfam" id="NF033788">
    <property type="entry name" value="HTH_metalloreg"/>
    <property type="match status" value="1"/>
</dbReference>
<dbReference type="NCBIfam" id="NF040642">
    <property type="entry name" value="sulf_sens_BigR"/>
    <property type="match status" value="1"/>
</dbReference>
<dbReference type="PANTHER" id="PTHR43132">
    <property type="entry name" value="ARSENICAL RESISTANCE OPERON REPRESSOR ARSR-RELATED"/>
    <property type="match status" value="1"/>
</dbReference>
<dbReference type="PANTHER" id="PTHR43132:SF2">
    <property type="entry name" value="ARSENICAL RESISTANCE OPERON REPRESSOR ARSR-RELATED"/>
    <property type="match status" value="1"/>
</dbReference>
<dbReference type="Pfam" id="PF01022">
    <property type="entry name" value="HTH_5"/>
    <property type="match status" value="1"/>
</dbReference>
<dbReference type="PRINTS" id="PR00778">
    <property type="entry name" value="HTHARSR"/>
</dbReference>
<dbReference type="SMART" id="SM00418">
    <property type="entry name" value="HTH_ARSR"/>
    <property type="match status" value="1"/>
</dbReference>
<dbReference type="SUPFAM" id="SSF46785">
    <property type="entry name" value="Winged helix' DNA-binding domain"/>
    <property type="match status" value="1"/>
</dbReference>
<dbReference type="PROSITE" id="PS50987">
    <property type="entry name" value="HTH_ARSR_2"/>
    <property type="match status" value="1"/>
</dbReference>
<keyword id="KW-0238">DNA-binding</keyword>
<keyword id="KW-1185">Reference proteome</keyword>
<keyword id="KW-0678">Repressor</keyword>
<keyword id="KW-0804">Transcription</keyword>
<keyword id="KW-0805">Transcription regulation</keyword>